<comment type="function">
    <text evidence="5">ATP citrate-lyase is the primary enzyme responsible for the synthesis of cytosolic acetyl-CoA, used for the elongation of fatty acids and biosynthesis of isoprenoids, flavonoids and malonated derivatives. May supply substrate to the cytosolic acetyl-CoA carboxylase, which generates the malonyl-CoA used for the synthesis of a multitude of compounds, including very long chain fatty acids and flavonoids. Required for normal growth and development and elongation of C18 fatty acids to C20 to C24 fatty acids in seeds. n contrast to all known animal ACL enzymes having a homomeric structure, plant ACLs are composed of alpha and beta chains.</text>
</comment>
<comment type="catalytic activity">
    <reaction evidence="5">
        <text>oxaloacetate + acetyl-CoA + ADP + phosphate = citrate + ATP + CoA</text>
        <dbReference type="Rhea" id="RHEA:21160"/>
        <dbReference type="ChEBI" id="CHEBI:16452"/>
        <dbReference type="ChEBI" id="CHEBI:16947"/>
        <dbReference type="ChEBI" id="CHEBI:30616"/>
        <dbReference type="ChEBI" id="CHEBI:43474"/>
        <dbReference type="ChEBI" id="CHEBI:57287"/>
        <dbReference type="ChEBI" id="CHEBI:57288"/>
        <dbReference type="ChEBI" id="CHEBI:456216"/>
        <dbReference type="EC" id="2.3.3.8"/>
    </reaction>
</comment>
<comment type="subunit">
    <text evidence="8">Heterooctamer of 4 alpha and 4 beta chains.</text>
</comment>
<comment type="subcellular location">
    <subcellularLocation>
        <location evidence="5">Cytoplasm</location>
        <location evidence="5">Cytosol</location>
    </subcellularLocation>
</comment>
<comment type="tissue specificity">
    <text evidence="5">Expressed in trichomes, epidermal leaf cells, anther tapetal cells, stigma and in young vascular bundles of expanding leaves, cotyledons, roots, pedicel of flowers and siliques.</text>
</comment>
<comment type="developmental stage">
    <text evidence="5">Expressed in flower buds at stage 6 of development in tapetal cells and at stage 10 in the epidermal cells of growing petals and ovaries. In young siliques, expressed transiently in the inner integument of the ovules just prior to testal deposition. Expressed in the developing embryo with a maximal level at the heart and torpedo stages. The expression then disappears in the mature embryo. During seed germination, expressed in the vascular bundles, apical meristem, epidermis of the seedling cotyledon, stem, and root. Highly expressed in the root tip of seedlings 4 days after imbibition.</text>
</comment>
<comment type="similarity">
    <text evidence="7">Belongs to the succinate/malate CoA ligase alpha subunit family.</text>
</comment>
<proteinExistence type="evidence at protein level"/>
<organism>
    <name type="scientific">Arabidopsis thaliana</name>
    <name type="common">Mouse-ear cress</name>
    <dbReference type="NCBI Taxonomy" id="3702"/>
    <lineage>
        <taxon>Eukaryota</taxon>
        <taxon>Viridiplantae</taxon>
        <taxon>Streptophyta</taxon>
        <taxon>Embryophyta</taxon>
        <taxon>Tracheophyta</taxon>
        <taxon>Spermatophyta</taxon>
        <taxon>Magnoliopsida</taxon>
        <taxon>eudicotyledons</taxon>
        <taxon>Gunneridae</taxon>
        <taxon>Pentapetalae</taxon>
        <taxon>rosids</taxon>
        <taxon>malvids</taxon>
        <taxon>Brassicales</taxon>
        <taxon>Brassicaceae</taxon>
        <taxon>Camelineae</taxon>
        <taxon>Arabidopsis</taxon>
    </lineage>
</organism>
<keyword id="KW-0012">Acyltransferase</keyword>
<keyword id="KW-0067">ATP-binding</keyword>
<keyword id="KW-0963">Cytoplasm</keyword>
<keyword id="KW-0444">Lipid biosynthesis</keyword>
<keyword id="KW-0443">Lipid metabolism</keyword>
<keyword id="KW-0460">Magnesium</keyword>
<keyword id="KW-0479">Metal-binding</keyword>
<keyword id="KW-0547">Nucleotide-binding</keyword>
<keyword id="KW-1185">Reference proteome</keyword>
<keyword id="KW-0808">Transferase</keyword>
<gene>
    <name evidence="6" type="primary">ACLB-2</name>
    <name evidence="9" type="ordered locus">At5g49460</name>
    <name evidence="10" type="ORF">K7J8.14</name>
</gene>
<dbReference type="EC" id="2.3.3.8" evidence="5"/>
<dbReference type="EMBL" id="AB023034">
    <property type="protein sequence ID" value="BAB09916.1"/>
    <property type="molecule type" value="Genomic_DNA"/>
</dbReference>
<dbReference type="EMBL" id="CP002688">
    <property type="protein sequence ID" value="AED95814.1"/>
    <property type="molecule type" value="Genomic_DNA"/>
</dbReference>
<dbReference type="EMBL" id="CP002688">
    <property type="protein sequence ID" value="ANM70656.1"/>
    <property type="molecule type" value="Genomic_DNA"/>
</dbReference>
<dbReference type="EMBL" id="AY035067">
    <property type="protein sequence ID" value="AAK59572.1"/>
    <property type="molecule type" value="mRNA"/>
</dbReference>
<dbReference type="EMBL" id="AY056594">
    <property type="protein sequence ID" value="AAL25638.1"/>
    <property type="molecule type" value="mRNA"/>
</dbReference>
<dbReference type="EMBL" id="AY062956">
    <property type="protein sequence ID" value="AAL33788.1"/>
    <property type="molecule type" value="mRNA"/>
</dbReference>
<dbReference type="RefSeq" id="NP_001332247.1">
    <property type="nucleotide sequence ID" value="NM_001344844.1"/>
</dbReference>
<dbReference type="RefSeq" id="NP_199757.1">
    <property type="nucleotide sequence ID" value="NM_124323.4"/>
</dbReference>
<dbReference type="SMR" id="Q9FGX1"/>
<dbReference type="BioGRID" id="20252">
    <property type="interactions" value="6"/>
</dbReference>
<dbReference type="FunCoup" id="Q9FGX1">
    <property type="interactions" value="3734"/>
</dbReference>
<dbReference type="IntAct" id="Q9FGX1">
    <property type="interactions" value="1"/>
</dbReference>
<dbReference type="STRING" id="3702.Q9FGX1"/>
<dbReference type="iPTMnet" id="Q9FGX1"/>
<dbReference type="PaxDb" id="3702-AT5G49460.1"/>
<dbReference type="ProteomicsDB" id="244368"/>
<dbReference type="EnsemblPlants" id="AT5G49460.1">
    <property type="protein sequence ID" value="AT5G49460.1"/>
    <property type="gene ID" value="AT5G49460"/>
</dbReference>
<dbReference type="EnsemblPlants" id="AT5G49460.2">
    <property type="protein sequence ID" value="AT5G49460.2"/>
    <property type="gene ID" value="AT5G49460"/>
</dbReference>
<dbReference type="GeneID" id="835006"/>
<dbReference type="Gramene" id="AT5G49460.1">
    <property type="protein sequence ID" value="AT5G49460.1"/>
    <property type="gene ID" value="AT5G49460"/>
</dbReference>
<dbReference type="Gramene" id="AT5G49460.2">
    <property type="protein sequence ID" value="AT5G49460.2"/>
    <property type="gene ID" value="AT5G49460"/>
</dbReference>
<dbReference type="KEGG" id="ath:AT5G49460"/>
<dbReference type="Araport" id="AT5G49460"/>
<dbReference type="TAIR" id="AT5G49460">
    <property type="gene designation" value="ACLB-2"/>
</dbReference>
<dbReference type="eggNOG" id="KOG1254">
    <property type="taxonomic scope" value="Eukaryota"/>
</dbReference>
<dbReference type="HOGENOM" id="CLU_006587_4_2_1"/>
<dbReference type="InParanoid" id="Q9FGX1"/>
<dbReference type="OMA" id="HMLRYQA"/>
<dbReference type="OrthoDB" id="1054671at2759"/>
<dbReference type="PhylomeDB" id="Q9FGX1"/>
<dbReference type="BioCyc" id="MetaCyc:AT5G49460-MONOMER"/>
<dbReference type="CD-CODE" id="4299E36E">
    <property type="entry name" value="Nucleolus"/>
</dbReference>
<dbReference type="PRO" id="PR:Q9FGX1"/>
<dbReference type="Proteomes" id="UP000006548">
    <property type="component" value="Chromosome 5"/>
</dbReference>
<dbReference type="ExpressionAtlas" id="Q9FGX1">
    <property type="expression patterns" value="baseline and differential"/>
</dbReference>
<dbReference type="GO" id="GO:0140615">
    <property type="term" value="C:ATP-dependent citrate lyase complex"/>
    <property type="evidence" value="ECO:0000314"/>
    <property type="project" value="TAIR"/>
</dbReference>
<dbReference type="GO" id="GO:0005829">
    <property type="term" value="C:cytosol"/>
    <property type="evidence" value="ECO:0000314"/>
    <property type="project" value="TAIR"/>
</dbReference>
<dbReference type="GO" id="GO:0005524">
    <property type="term" value="F:ATP binding"/>
    <property type="evidence" value="ECO:0007669"/>
    <property type="project" value="UniProtKB-KW"/>
</dbReference>
<dbReference type="GO" id="GO:0003878">
    <property type="term" value="F:ATP citrate synthase activity"/>
    <property type="evidence" value="ECO:0000314"/>
    <property type="project" value="TAIR"/>
</dbReference>
<dbReference type="GO" id="GO:0046872">
    <property type="term" value="F:metal ion binding"/>
    <property type="evidence" value="ECO:0007669"/>
    <property type="project" value="UniProtKB-KW"/>
</dbReference>
<dbReference type="GO" id="GO:0006085">
    <property type="term" value="P:acetyl-CoA biosynthetic process"/>
    <property type="evidence" value="ECO:0000304"/>
    <property type="project" value="TAIR"/>
</dbReference>
<dbReference type="GO" id="GO:0006629">
    <property type="term" value="P:lipid metabolic process"/>
    <property type="evidence" value="ECO:0007669"/>
    <property type="project" value="UniProtKB-KW"/>
</dbReference>
<dbReference type="CDD" id="cd06100">
    <property type="entry name" value="CCL_ACL-C"/>
    <property type="match status" value="1"/>
</dbReference>
<dbReference type="FunFam" id="3.40.50.720:FF:000136">
    <property type="entry name" value="ATP-citrate synthase beta chain protein"/>
    <property type="match status" value="1"/>
</dbReference>
<dbReference type="FunFam" id="3.40.50.261:FF:000003">
    <property type="entry name" value="ATP-citrate synthase subunit"/>
    <property type="match status" value="1"/>
</dbReference>
<dbReference type="FunFam" id="1.10.230.10:FF:000005">
    <property type="entry name" value="ATP-citrate synthase subunit 1"/>
    <property type="match status" value="1"/>
</dbReference>
<dbReference type="Gene3D" id="1.10.580.10">
    <property type="entry name" value="Citrate Synthase, domain 1"/>
    <property type="match status" value="1"/>
</dbReference>
<dbReference type="Gene3D" id="1.10.230.10">
    <property type="entry name" value="Cytochrome P450-Terp, domain 2"/>
    <property type="match status" value="1"/>
</dbReference>
<dbReference type="Gene3D" id="3.40.50.720">
    <property type="entry name" value="NAD(P)-binding Rossmann-like Domain"/>
    <property type="match status" value="1"/>
</dbReference>
<dbReference type="Gene3D" id="3.40.50.261">
    <property type="entry name" value="Succinyl-CoA synthetase domains"/>
    <property type="match status" value="1"/>
</dbReference>
<dbReference type="InterPro" id="IPR017440">
    <property type="entry name" value="Cit_synth/succinyl-CoA_lig_AS"/>
</dbReference>
<dbReference type="InterPro" id="IPR016142">
    <property type="entry name" value="Citrate_synth-like_lrg_a-sub"/>
</dbReference>
<dbReference type="InterPro" id="IPR016143">
    <property type="entry name" value="Citrate_synth-like_sm_a-sub"/>
</dbReference>
<dbReference type="InterPro" id="IPR002020">
    <property type="entry name" value="Citrate_synthase"/>
</dbReference>
<dbReference type="InterPro" id="IPR036969">
    <property type="entry name" value="Citrate_synthase_sf"/>
</dbReference>
<dbReference type="InterPro" id="IPR033847">
    <property type="entry name" value="Citrt_syn/SCS-alpha_CS"/>
</dbReference>
<dbReference type="InterPro" id="IPR036291">
    <property type="entry name" value="NAD(P)-bd_dom_sf"/>
</dbReference>
<dbReference type="InterPro" id="IPR017866">
    <property type="entry name" value="Succ-CoA_synthase_bsu_CS"/>
</dbReference>
<dbReference type="InterPro" id="IPR005811">
    <property type="entry name" value="SUCC_ACL_C"/>
</dbReference>
<dbReference type="InterPro" id="IPR016102">
    <property type="entry name" value="Succinyl-CoA_synth-like"/>
</dbReference>
<dbReference type="PANTHER" id="PTHR23118">
    <property type="entry name" value="ATP-CITRATE SYNTHASE"/>
    <property type="match status" value="1"/>
</dbReference>
<dbReference type="PANTHER" id="PTHR23118:SF42">
    <property type="entry name" value="ATP-CITRATE SYNTHASE"/>
    <property type="match status" value="1"/>
</dbReference>
<dbReference type="Pfam" id="PF00285">
    <property type="entry name" value="Citrate_synt"/>
    <property type="match status" value="1"/>
</dbReference>
<dbReference type="Pfam" id="PF00549">
    <property type="entry name" value="Ligase_CoA"/>
    <property type="match status" value="1"/>
</dbReference>
<dbReference type="PRINTS" id="PR01798">
    <property type="entry name" value="SCOASYNTHASE"/>
</dbReference>
<dbReference type="SUPFAM" id="SSF48256">
    <property type="entry name" value="Citrate synthase"/>
    <property type="match status" value="1"/>
</dbReference>
<dbReference type="SUPFAM" id="SSF51735">
    <property type="entry name" value="NAD(P)-binding Rossmann-fold domains"/>
    <property type="match status" value="1"/>
</dbReference>
<dbReference type="PROSITE" id="PS01216">
    <property type="entry name" value="SUCCINYL_COA_LIG_1"/>
    <property type="match status" value="1"/>
</dbReference>
<dbReference type="PROSITE" id="PS00399">
    <property type="entry name" value="SUCCINYL_COA_LIG_2"/>
    <property type="match status" value="1"/>
</dbReference>
<dbReference type="PROSITE" id="PS01217">
    <property type="entry name" value="SUCCINYL_COA_LIG_3"/>
    <property type="match status" value="1"/>
</dbReference>
<sequence length="608" mass="65828">MATGQLFSRTTQALFYNYKQLPVQRMLDFDFLCGRETPSVAGIINPGSEGFQKLFFGQEEIAIPVHAAIEAACAAHPTADVFINFASFRSAAASSMAALKQPTIKVVAIIAEGVPESDTKQLIAYARANNKVVIGPATVGGIQAGAFKIGDTAGTIDNIIQCKLYRPGSVGFVSKSGGMSNEMYNTVARVTDGIYEGIAIGGDVFPGSTLSDHILRFNNIPQIKMMVVLGELGGRDEYSLVEALKEGKVNKPVVAWVSGTCARLFKSEVQFGHAGAKSGGEMESAQAKNQALIDAGAIVPTSFEALESAIKETFEKLVEEGKVSPIKEVIPPQIPEDLNSAIKSGKVRAPTHIISTISDDRGEEPCYAGVPMSSIIEQGYGVGDVISLLWFKRSLPRYCTKFIEICIMLCADHGPCVSGAHNTIVTARAGKDLVSSLVSGLLTIGPRFGGAIDDAARYFKDACDRNLTPYEFVEGMKKKGIRVPGIGHRIKSRDNRDKRVELLQKFARSNFPSVKYMEYAVTVETYTLSKANNLVLNVDGAIGSLFLDLLAGSGMFTKQEIDEIVQIGYLNGLFVLARSIGLIGHTFDQKRLKQPLYRHPWEDVLYTK</sequence>
<reference key="1">
    <citation type="journal article" date="2000" name="DNA Res.">
        <title>Structural analysis of Arabidopsis thaliana chromosome 5. X. Sequence features of the regions of 3,076,755 bp covered by sixty P1 and TAC clones.</title>
        <authorList>
            <person name="Sato S."/>
            <person name="Nakamura Y."/>
            <person name="Kaneko T."/>
            <person name="Katoh T."/>
            <person name="Asamizu E."/>
            <person name="Kotani H."/>
            <person name="Tabata S."/>
        </authorList>
    </citation>
    <scope>NUCLEOTIDE SEQUENCE [LARGE SCALE GENOMIC DNA]</scope>
    <source>
        <strain>cv. Columbia</strain>
    </source>
</reference>
<reference key="2">
    <citation type="journal article" date="2017" name="Plant J.">
        <title>Araport11: a complete reannotation of the Arabidopsis thaliana reference genome.</title>
        <authorList>
            <person name="Cheng C.Y."/>
            <person name="Krishnakumar V."/>
            <person name="Chan A.P."/>
            <person name="Thibaud-Nissen F."/>
            <person name="Schobel S."/>
            <person name="Town C.D."/>
        </authorList>
    </citation>
    <scope>GENOME REANNOTATION</scope>
    <source>
        <strain>cv. Columbia</strain>
    </source>
</reference>
<reference key="3">
    <citation type="journal article" date="2003" name="Science">
        <title>Empirical analysis of transcriptional activity in the Arabidopsis genome.</title>
        <authorList>
            <person name="Yamada K."/>
            <person name="Lim J."/>
            <person name="Dale J.M."/>
            <person name="Chen H."/>
            <person name="Shinn P."/>
            <person name="Palm C.J."/>
            <person name="Southwick A.M."/>
            <person name="Wu H.C."/>
            <person name="Kim C.J."/>
            <person name="Nguyen M."/>
            <person name="Pham P.K."/>
            <person name="Cheuk R.F."/>
            <person name="Karlin-Newmann G."/>
            <person name="Liu S.X."/>
            <person name="Lam B."/>
            <person name="Sakano H."/>
            <person name="Wu T."/>
            <person name="Yu G."/>
            <person name="Miranda M."/>
            <person name="Quach H.L."/>
            <person name="Tripp M."/>
            <person name="Chang C.H."/>
            <person name="Lee J.M."/>
            <person name="Toriumi M.J."/>
            <person name="Chan M.M."/>
            <person name="Tang C.C."/>
            <person name="Onodera C.S."/>
            <person name="Deng J.M."/>
            <person name="Akiyama K."/>
            <person name="Ansari Y."/>
            <person name="Arakawa T."/>
            <person name="Banh J."/>
            <person name="Banno F."/>
            <person name="Bowser L."/>
            <person name="Brooks S.Y."/>
            <person name="Carninci P."/>
            <person name="Chao Q."/>
            <person name="Choy N."/>
            <person name="Enju A."/>
            <person name="Goldsmith A.D."/>
            <person name="Gurjal M."/>
            <person name="Hansen N.F."/>
            <person name="Hayashizaki Y."/>
            <person name="Johnson-Hopson C."/>
            <person name="Hsuan V.W."/>
            <person name="Iida K."/>
            <person name="Karnes M."/>
            <person name="Khan S."/>
            <person name="Koesema E."/>
            <person name="Ishida J."/>
            <person name="Jiang P.X."/>
            <person name="Jones T."/>
            <person name="Kawai J."/>
            <person name="Kamiya A."/>
            <person name="Meyers C."/>
            <person name="Nakajima M."/>
            <person name="Narusaka M."/>
            <person name="Seki M."/>
            <person name="Sakurai T."/>
            <person name="Satou M."/>
            <person name="Tamse R."/>
            <person name="Vaysberg M."/>
            <person name="Wallender E.K."/>
            <person name="Wong C."/>
            <person name="Yamamura Y."/>
            <person name="Yuan S."/>
            <person name="Shinozaki K."/>
            <person name="Davis R.W."/>
            <person name="Theologis A."/>
            <person name="Ecker J.R."/>
        </authorList>
    </citation>
    <scope>NUCLEOTIDE SEQUENCE [LARGE SCALE MRNA]</scope>
    <source>
        <strain>cv. Columbia</strain>
    </source>
</reference>
<reference key="4">
    <citation type="journal article" date="2002" name="Plant Physiol.">
        <title>Molecular characterization of a heteromeric ATP-citrate lyase that generates cytosolic acetyl-coenzyme A in Arabidopsis.</title>
        <authorList>
            <person name="Fatland B.L."/>
            <person name="Ke J."/>
            <person name="Anderson M.D."/>
            <person name="Mentzen W.I."/>
            <person name="Cui L.W."/>
            <person name="Allred C.C."/>
            <person name="Johnston J.L."/>
            <person name="Nikolau B.J."/>
            <person name="Wurtele E.S."/>
        </authorList>
    </citation>
    <scope>FUNCTION</scope>
    <scope>CATALYTIC ACTIVITY</scope>
    <scope>SUBUNIT</scope>
    <scope>SUBCELLULAR LOCATION</scope>
    <scope>TISSUE SPECIFICITY</scope>
    <scope>DEVELOPMENTAL STAGE</scope>
    <source>
        <strain>cv. Columbia</strain>
    </source>
</reference>
<accession>Q9FGX1</accession>
<feature type="chain" id="PRO_0000412222" description="ATP-citrate synthase beta chain protein 2">
    <location>
        <begin position="1"/>
        <end position="608"/>
    </location>
</feature>
<feature type="active site" description="Tele-phosphohistidine intermediate" evidence="1">
    <location>
        <position position="273"/>
    </location>
</feature>
<feature type="binding site" evidence="2">
    <location>
        <begin position="214"/>
        <end position="234"/>
    </location>
    <ligand>
        <name>ATP</name>
        <dbReference type="ChEBI" id="CHEBI:30616"/>
    </ligand>
</feature>
<feature type="binding site" evidence="3">
    <location>
        <position position="231"/>
    </location>
    <ligand>
        <name>Mg(2+)</name>
        <dbReference type="ChEBI" id="CHEBI:18420"/>
    </ligand>
</feature>
<feature type="binding site" evidence="2">
    <location>
        <begin position="265"/>
        <end position="291"/>
    </location>
    <ligand>
        <name>ATP</name>
        <dbReference type="ChEBI" id="CHEBI:30616"/>
    </ligand>
</feature>
<feature type="binding site" evidence="4">
    <location>
        <begin position="292"/>
        <end position="302"/>
    </location>
    <ligand>
        <name>CoA</name>
        <dbReference type="ChEBI" id="CHEBI:57287"/>
    </ligand>
</feature>
<evidence type="ECO:0000250" key="1">
    <source>
        <dbReference type="UniProtKB" id="P16638"/>
    </source>
</evidence>
<evidence type="ECO:0000250" key="2">
    <source>
        <dbReference type="UniProtKB" id="P53585"/>
    </source>
</evidence>
<evidence type="ECO:0000250" key="3">
    <source>
        <dbReference type="UniProtKB" id="Q84LB6"/>
    </source>
</evidence>
<evidence type="ECO:0000255" key="4"/>
<evidence type="ECO:0000269" key="5">
    <source>
    </source>
</evidence>
<evidence type="ECO:0000303" key="6">
    <source>
    </source>
</evidence>
<evidence type="ECO:0000305" key="7"/>
<evidence type="ECO:0000305" key="8">
    <source>
    </source>
</evidence>
<evidence type="ECO:0000312" key="9">
    <source>
        <dbReference type="Araport" id="AT5G49460"/>
    </source>
</evidence>
<evidence type="ECO:0000312" key="10">
    <source>
        <dbReference type="EMBL" id="BAB09916.1"/>
    </source>
</evidence>
<name>ACLB2_ARATH</name>
<protein>
    <recommendedName>
        <fullName evidence="6">ATP-citrate synthase beta chain protein 2</fullName>
        <shortName evidence="6">ATP-citrate synthase B-2</shortName>
        <ecNumber evidence="5">2.3.3.8</ecNumber>
    </recommendedName>
    <alternativeName>
        <fullName evidence="6">ATP-citrate lyase B-2</fullName>
    </alternativeName>
    <alternativeName>
        <fullName evidence="6">Citrate cleavage enzyme B-2</fullName>
    </alternativeName>
</protein>